<evidence type="ECO:0000256" key="1">
    <source>
        <dbReference type="SAM" id="MobiDB-lite"/>
    </source>
</evidence>
<evidence type="ECO:0000305" key="2"/>
<evidence type="ECO:0000312" key="3">
    <source>
        <dbReference type="HGNC" id="HGNC:53450"/>
    </source>
</evidence>
<dbReference type="EMBL" id="AL590282">
    <property type="status" value="NOT_ANNOTATED_CDS"/>
    <property type="molecule type" value="Genomic_DNA"/>
</dbReference>
<dbReference type="CCDS" id="CCDS87783.1"/>
<dbReference type="RefSeq" id="NP_001345378.1">
    <property type="nucleotide sequence ID" value="NM_001358449.1"/>
</dbReference>
<dbReference type="STRING" id="9606.ENSP00000490576"/>
<dbReference type="BioMuta" id="ETDC"/>
<dbReference type="MassIVE" id="A0A1B0GVM5"/>
<dbReference type="Ensembl" id="ENST00000635820.1">
    <property type="protein sequence ID" value="ENSP00000490576.1"/>
    <property type="gene ID" value="ENSG00000283644.1"/>
</dbReference>
<dbReference type="GeneID" id="110806299"/>
<dbReference type="MANE-Select" id="ENST00000635820.1">
    <property type="protein sequence ID" value="ENSP00000490576.1"/>
    <property type="RefSeq nucleotide sequence ID" value="NM_001358449.1"/>
    <property type="RefSeq protein sequence ID" value="NP_001345378.1"/>
</dbReference>
<dbReference type="AGR" id="HGNC:53450"/>
<dbReference type="GeneCards" id="ETDC"/>
<dbReference type="HGNC" id="HGNC:53450">
    <property type="gene designation" value="ETDC"/>
</dbReference>
<dbReference type="HPA" id="ENSG00000283644">
    <property type="expression patterns" value="Tissue enhanced (skin)"/>
</dbReference>
<dbReference type="neXtProt" id="NX_A0A1B0GVM5"/>
<dbReference type="VEuPathDB" id="HostDB:ENSG00000283644"/>
<dbReference type="GeneTree" id="ENSGT01130000278374"/>
<dbReference type="InParanoid" id="A0A1B0GVM5"/>
<dbReference type="OMA" id="KWLWMLP"/>
<dbReference type="PAN-GO" id="A0A1B0GVM5">
    <property type="GO annotations" value="0 GO annotations based on evolutionary models"/>
</dbReference>
<dbReference type="Pharos" id="A0A1B0GVM5">
    <property type="development level" value="Tdark"/>
</dbReference>
<dbReference type="PRO" id="PR:A0A1B0GVM5"/>
<dbReference type="Proteomes" id="UP000005640">
    <property type="component" value="Chromosome X"/>
</dbReference>
<dbReference type="RNAct" id="A0A1B0GVM5">
    <property type="molecule type" value="protein"/>
</dbReference>
<dbReference type="Bgee" id="ENSG00000283644">
    <property type="expression patterns" value="Expressed in adrenal tissue and 76 other cell types or tissues"/>
</dbReference>
<gene>
    <name evidence="3" type="primary">ETDC</name>
</gene>
<keyword id="KW-1185">Reference proteome</keyword>
<organism>
    <name type="scientific">Homo sapiens</name>
    <name type="common">Human</name>
    <dbReference type="NCBI Taxonomy" id="9606"/>
    <lineage>
        <taxon>Eukaryota</taxon>
        <taxon>Metazoa</taxon>
        <taxon>Chordata</taxon>
        <taxon>Craniata</taxon>
        <taxon>Vertebrata</taxon>
        <taxon>Euteleostomi</taxon>
        <taxon>Mammalia</taxon>
        <taxon>Eutheria</taxon>
        <taxon>Euarchontoglires</taxon>
        <taxon>Primates</taxon>
        <taxon>Haplorrhini</taxon>
        <taxon>Catarrhini</taxon>
        <taxon>Hominidae</taxon>
        <taxon>Homo</taxon>
    </lineage>
</organism>
<sequence length="59" mass="6800">MDKELPKASPSEPALNIKKSGKSFKCKKPTKNVQVFLINRQLGRNRSDTDLSKWLWMLP</sequence>
<protein>
    <recommendedName>
        <fullName evidence="2">Embryonic testis differentiation protein homolog C</fullName>
    </recommendedName>
</protein>
<proteinExistence type="predicted"/>
<reference key="1">
    <citation type="journal article" date="2005" name="Nature">
        <title>The DNA sequence of the human X chromosome.</title>
        <authorList>
            <person name="Ross M.T."/>
            <person name="Grafham D.V."/>
            <person name="Coffey A.J."/>
            <person name="Scherer S."/>
            <person name="McLay K."/>
            <person name="Muzny D."/>
            <person name="Platzer M."/>
            <person name="Howell G.R."/>
            <person name="Burrows C."/>
            <person name="Bird C.P."/>
            <person name="Frankish A."/>
            <person name="Lovell F.L."/>
            <person name="Howe K.L."/>
            <person name="Ashurst J.L."/>
            <person name="Fulton R.S."/>
            <person name="Sudbrak R."/>
            <person name="Wen G."/>
            <person name="Jones M.C."/>
            <person name="Hurles M.E."/>
            <person name="Andrews T.D."/>
            <person name="Scott C.E."/>
            <person name="Searle S."/>
            <person name="Ramser J."/>
            <person name="Whittaker A."/>
            <person name="Deadman R."/>
            <person name="Carter N.P."/>
            <person name="Hunt S.E."/>
            <person name="Chen R."/>
            <person name="Cree A."/>
            <person name="Gunaratne P."/>
            <person name="Havlak P."/>
            <person name="Hodgson A."/>
            <person name="Metzker M.L."/>
            <person name="Richards S."/>
            <person name="Scott G."/>
            <person name="Steffen D."/>
            <person name="Sodergren E."/>
            <person name="Wheeler D.A."/>
            <person name="Worley K.C."/>
            <person name="Ainscough R."/>
            <person name="Ambrose K.D."/>
            <person name="Ansari-Lari M.A."/>
            <person name="Aradhya S."/>
            <person name="Ashwell R.I."/>
            <person name="Babbage A.K."/>
            <person name="Bagguley C.L."/>
            <person name="Ballabio A."/>
            <person name="Banerjee R."/>
            <person name="Barker G.E."/>
            <person name="Barlow K.F."/>
            <person name="Barrett I.P."/>
            <person name="Bates K.N."/>
            <person name="Beare D.M."/>
            <person name="Beasley H."/>
            <person name="Beasley O."/>
            <person name="Beck A."/>
            <person name="Bethel G."/>
            <person name="Blechschmidt K."/>
            <person name="Brady N."/>
            <person name="Bray-Allen S."/>
            <person name="Bridgeman A.M."/>
            <person name="Brown A.J."/>
            <person name="Brown M.J."/>
            <person name="Bonnin D."/>
            <person name="Bruford E.A."/>
            <person name="Buhay C."/>
            <person name="Burch P."/>
            <person name="Burford D."/>
            <person name="Burgess J."/>
            <person name="Burrill W."/>
            <person name="Burton J."/>
            <person name="Bye J.M."/>
            <person name="Carder C."/>
            <person name="Carrel L."/>
            <person name="Chako J."/>
            <person name="Chapman J.C."/>
            <person name="Chavez D."/>
            <person name="Chen E."/>
            <person name="Chen G."/>
            <person name="Chen Y."/>
            <person name="Chen Z."/>
            <person name="Chinault C."/>
            <person name="Ciccodicola A."/>
            <person name="Clark S.Y."/>
            <person name="Clarke G."/>
            <person name="Clee C.M."/>
            <person name="Clegg S."/>
            <person name="Clerc-Blankenburg K."/>
            <person name="Clifford K."/>
            <person name="Cobley V."/>
            <person name="Cole C.G."/>
            <person name="Conquer J.S."/>
            <person name="Corby N."/>
            <person name="Connor R.E."/>
            <person name="David R."/>
            <person name="Davies J."/>
            <person name="Davis C."/>
            <person name="Davis J."/>
            <person name="Delgado O."/>
            <person name="Deshazo D."/>
            <person name="Dhami P."/>
            <person name="Ding Y."/>
            <person name="Dinh H."/>
            <person name="Dodsworth S."/>
            <person name="Draper H."/>
            <person name="Dugan-Rocha S."/>
            <person name="Dunham A."/>
            <person name="Dunn M."/>
            <person name="Durbin K.J."/>
            <person name="Dutta I."/>
            <person name="Eades T."/>
            <person name="Ellwood M."/>
            <person name="Emery-Cohen A."/>
            <person name="Errington H."/>
            <person name="Evans K.L."/>
            <person name="Faulkner L."/>
            <person name="Francis F."/>
            <person name="Frankland J."/>
            <person name="Fraser A.E."/>
            <person name="Galgoczy P."/>
            <person name="Gilbert J."/>
            <person name="Gill R."/>
            <person name="Gloeckner G."/>
            <person name="Gregory S.G."/>
            <person name="Gribble S."/>
            <person name="Griffiths C."/>
            <person name="Grocock R."/>
            <person name="Gu Y."/>
            <person name="Gwilliam R."/>
            <person name="Hamilton C."/>
            <person name="Hart E.A."/>
            <person name="Hawes A."/>
            <person name="Heath P.D."/>
            <person name="Heitmann K."/>
            <person name="Hennig S."/>
            <person name="Hernandez J."/>
            <person name="Hinzmann B."/>
            <person name="Ho S."/>
            <person name="Hoffs M."/>
            <person name="Howden P.J."/>
            <person name="Huckle E.J."/>
            <person name="Hume J."/>
            <person name="Hunt P.J."/>
            <person name="Hunt A.R."/>
            <person name="Isherwood J."/>
            <person name="Jacob L."/>
            <person name="Johnson D."/>
            <person name="Jones S."/>
            <person name="de Jong P.J."/>
            <person name="Joseph S.S."/>
            <person name="Keenan S."/>
            <person name="Kelly S."/>
            <person name="Kershaw J.K."/>
            <person name="Khan Z."/>
            <person name="Kioschis P."/>
            <person name="Klages S."/>
            <person name="Knights A.J."/>
            <person name="Kosiura A."/>
            <person name="Kovar-Smith C."/>
            <person name="Laird G.K."/>
            <person name="Langford C."/>
            <person name="Lawlor S."/>
            <person name="Leversha M."/>
            <person name="Lewis L."/>
            <person name="Liu W."/>
            <person name="Lloyd C."/>
            <person name="Lloyd D.M."/>
            <person name="Loulseged H."/>
            <person name="Loveland J.E."/>
            <person name="Lovell J.D."/>
            <person name="Lozado R."/>
            <person name="Lu J."/>
            <person name="Lyne R."/>
            <person name="Ma J."/>
            <person name="Maheshwari M."/>
            <person name="Matthews L.H."/>
            <person name="McDowall J."/>
            <person name="McLaren S."/>
            <person name="McMurray A."/>
            <person name="Meidl P."/>
            <person name="Meitinger T."/>
            <person name="Milne S."/>
            <person name="Miner G."/>
            <person name="Mistry S.L."/>
            <person name="Morgan M."/>
            <person name="Morris S."/>
            <person name="Mueller I."/>
            <person name="Mullikin J.C."/>
            <person name="Nguyen N."/>
            <person name="Nordsiek G."/>
            <person name="Nyakatura G."/>
            <person name="O'dell C.N."/>
            <person name="Okwuonu G."/>
            <person name="Palmer S."/>
            <person name="Pandian R."/>
            <person name="Parker D."/>
            <person name="Parrish J."/>
            <person name="Pasternak S."/>
            <person name="Patel D."/>
            <person name="Pearce A.V."/>
            <person name="Pearson D.M."/>
            <person name="Pelan S.E."/>
            <person name="Perez L."/>
            <person name="Porter K.M."/>
            <person name="Ramsey Y."/>
            <person name="Reichwald K."/>
            <person name="Rhodes S."/>
            <person name="Ridler K.A."/>
            <person name="Schlessinger D."/>
            <person name="Schueler M.G."/>
            <person name="Sehra H.K."/>
            <person name="Shaw-Smith C."/>
            <person name="Shen H."/>
            <person name="Sheridan E.M."/>
            <person name="Shownkeen R."/>
            <person name="Skuce C.D."/>
            <person name="Smith M.L."/>
            <person name="Sotheran E.C."/>
            <person name="Steingruber H.E."/>
            <person name="Steward C.A."/>
            <person name="Storey R."/>
            <person name="Swann R.M."/>
            <person name="Swarbreck D."/>
            <person name="Tabor P.E."/>
            <person name="Taudien S."/>
            <person name="Taylor T."/>
            <person name="Teague B."/>
            <person name="Thomas K."/>
            <person name="Thorpe A."/>
            <person name="Timms K."/>
            <person name="Tracey A."/>
            <person name="Trevanion S."/>
            <person name="Tromans A.C."/>
            <person name="d'Urso M."/>
            <person name="Verduzco D."/>
            <person name="Villasana D."/>
            <person name="Waldron L."/>
            <person name="Wall M."/>
            <person name="Wang Q."/>
            <person name="Warren J."/>
            <person name="Warry G.L."/>
            <person name="Wei X."/>
            <person name="West A."/>
            <person name="Whitehead S.L."/>
            <person name="Whiteley M.N."/>
            <person name="Wilkinson J.E."/>
            <person name="Willey D.L."/>
            <person name="Williams G."/>
            <person name="Williams L."/>
            <person name="Williamson A."/>
            <person name="Williamson H."/>
            <person name="Wilming L."/>
            <person name="Woodmansey R.L."/>
            <person name="Wray P.W."/>
            <person name="Yen J."/>
            <person name="Zhang J."/>
            <person name="Zhou J."/>
            <person name="Zoghbi H."/>
            <person name="Zorilla S."/>
            <person name="Buck D."/>
            <person name="Reinhardt R."/>
            <person name="Poustka A."/>
            <person name="Rosenthal A."/>
            <person name="Lehrach H."/>
            <person name="Meindl A."/>
            <person name="Minx P.J."/>
            <person name="Hillier L.W."/>
            <person name="Willard H.F."/>
            <person name="Wilson R.K."/>
            <person name="Waterston R.H."/>
            <person name="Rice C.M."/>
            <person name="Vaudin M."/>
            <person name="Coulson A."/>
            <person name="Nelson D.L."/>
            <person name="Weinstock G."/>
            <person name="Sulston J.E."/>
            <person name="Durbin R.M."/>
            <person name="Hubbard T."/>
            <person name="Gibbs R.A."/>
            <person name="Beck S."/>
            <person name="Rogers J."/>
            <person name="Bentley D.R."/>
        </authorList>
    </citation>
    <scope>NUCLEOTIDE SEQUENCE [LARGE SCALE GENOMIC DNA]</scope>
</reference>
<name>ETDC_HUMAN</name>
<accession>A0A1B0GVM5</accession>
<feature type="chain" id="PRO_0000444872" description="Embryonic testis differentiation protein homolog C">
    <location>
        <begin position="1"/>
        <end position="59"/>
    </location>
</feature>
<feature type="region of interest" description="Disordered" evidence="1">
    <location>
        <begin position="1"/>
        <end position="22"/>
    </location>
</feature>